<feature type="chain" id="PRO_0000237608" description="Vesicle transport protein GOT1A">
    <location>
        <begin position="1"/>
        <end position="133"/>
    </location>
</feature>
<feature type="topological domain" description="Cytoplasmic" evidence="3">
    <location>
        <begin position="1"/>
        <end position="9"/>
    </location>
</feature>
<feature type="transmembrane region" description="Helical; Name=1" evidence="3">
    <location>
        <begin position="10"/>
        <end position="30"/>
    </location>
</feature>
<feature type="topological domain" description="Lumenal" evidence="3">
    <location>
        <position position="31"/>
    </location>
</feature>
<feature type="transmembrane region" description="Helical; Name=2" evidence="3">
    <location>
        <begin position="32"/>
        <end position="52"/>
    </location>
</feature>
<feature type="topological domain" description="Cytoplasmic" evidence="3">
    <location>
        <begin position="53"/>
        <end position="68"/>
    </location>
</feature>
<feature type="transmembrane region" description="Helical; Name=3" evidence="3">
    <location>
        <begin position="69"/>
        <end position="89"/>
    </location>
</feature>
<feature type="topological domain" description="Lumenal" evidence="3">
    <location>
        <begin position="90"/>
        <end position="92"/>
    </location>
</feature>
<feature type="transmembrane region" description="Helical; Name=4" evidence="3">
    <location>
        <begin position="93"/>
        <end position="113"/>
    </location>
</feature>
<feature type="topological domain" description="Cytoplasmic" evidence="3">
    <location>
        <begin position="114"/>
        <end position="133"/>
    </location>
</feature>
<comment type="function">
    <text evidence="2">May be involved in fusion of ER-derived transport vesicles with the Golgi complex.</text>
</comment>
<comment type="subcellular location">
    <subcellularLocation>
        <location evidence="1">Golgi apparatus membrane</location>
        <topology evidence="1">Multi-pass membrane protein</topology>
    </subcellularLocation>
</comment>
<comment type="similarity">
    <text evidence="3">Belongs to the GOT1 family.</text>
</comment>
<sequence>MISITEWQKIGVGITGFGVFFILFGILLYFDSVLLAFGNLLFLTGLSLIIGLRRTFAFFFQRHKLKGTSFFLGGVAIVLLRWPLLGMLLEAYGFISLFKGFFPVVFGFLGSAFNIPFLSTLFQKLQGSSSSMV</sequence>
<evidence type="ECO:0000250" key="1"/>
<evidence type="ECO:0000250" key="2">
    <source>
        <dbReference type="UniProtKB" id="Q9Y3E0"/>
    </source>
</evidence>
<evidence type="ECO:0000255" key="3"/>
<evidence type="ECO:0000312" key="4">
    <source>
        <dbReference type="EMBL" id="AAH24448.1"/>
    </source>
</evidence>
<evidence type="ECO:0000312" key="5">
    <source>
        <dbReference type="EMBL" id="AAW34128.1"/>
    </source>
</evidence>
<evidence type="ECO:0000312" key="6">
    <source>
        <dbReference type="EMBL" id="BAB22205.1"/>
    </source>
</evidence>
<evidence type="ECO:0000312" key="7">
    <source>
        <dbReference type="EMBL" id="BAE24665.1"/>
    </source>
</evidence>
<evidence type="ECO:0000312" key="8">
    <source>
        <dbReference type="MGI" id="MGI:1915588"/>
    </source>
</evidence>
<organism>
    <name type="scientific">Mus musculus</name>
    <name type="common">Mouse</name>
    <dbReference type="NCBI Taxonomy" id="10090"/>
    <lineage>
        <taxon>Eukaryota</taxon>
        <taxon>Metazoa</taxon>
        <taxon>Chordata</taxon>
        <taxon>Craniata</taxon>
        <taxon>Vertebrata</taxon>
        <taxon>Euteleostomi</taxon>
        <taxon>Mammalia</taxon>
        <taxon>Eutheria</taxon>
        <taxon>Euarchontoglires</taxon>
        <taxon>Glires</taxon>
        <taxon>Rodentia</taxon>
        <taxon>Myomorpha</taxon>
        <taxon>Muroidea</taxon>
        <taxon>Muridae</taxon>
        <taxon>Murinae</taxon>
        <taxon>Mus</taxon>
        <taxon>Mus</taxon>
    </lineage>
</organism>
<accession>Q9DCQ3</accession>
<protein>
    <recommendedName>
        <fullName>Vesicle transport protein GOT1A</fullName>
    </recommendedName>
    <alternativeName>
        <fullName>Golgi transport 1 homolog A</fullName>
    </alternativeName>
</protein>
<keyword id="KW-0333">Golgi apparatus</keyword>
<keyword id="KW-0472">Membrane</keyword>
<keyword id="KW-0653">Protein transport</keyword>
<keyword id="KW-1185">Reference proteome</keyword>
<keyword id="KW-0812">Transmembrane</keyword>
<keyword id="KW-1133">Transmembrane helix</keyword>
<keyword id="KW-0813">Transport</keyword>
<reference evidence="5" key="1">
    <citation type="submission" date="2004-08" db="EMBL/GenBank/DDBJ databases">
        <authorList>
            <person name="Xie H."/>
            <person name="Bonaldo M.F."/>
            <person name="Soares M.B."/>
        </authorList>
    </citation>
    <scope>NUCLEOTIDE SEQUENCE [MRNA]</scope>
    <source>
        <strain evidence="5">C57BL/6J</strain>
        <tissue evidence="5">Placenta</tissue>
    </source>
</reference>
<reference evidence="6" key="2">
    <citation type="journal article" date="2005" name="Science">
        <title>The transcriptional landscape of the mammalian genome.</title>
        <authorList>
            <person name="Carninci P."/>
            <person name="Kasukawa T."/>
            <person name="Katayama S."/>
            <person name="Gough J."/>
            <person name="Frith M.C."/>
            <person name="Maeda N."/>
            <person name="Oyama R."/>
            <person name="Ravasi T."/>
            <person name="Lenhard B."/>
            <person name="Wells C."/>
            <person name="Kodzius R."/>
            <person name="Shimokawa K."/>
            <person name="Bajic V.B."/>
            <person name="Brenner S.E."/>
            <person name="Batalov S."/>
            <person name="Forrest A.R."/>
            <person name="Zavolan M."/>
            <person name="Davis M.J."/>
            <person name="Wilming L.G."/>
            <person name="Aidinis V."/>
            <person name="Allen J.E."/>
            <person name="Ambesi-Impiombato A."/>
            <person name="Apweiler R."/>
            <person name="Aturaliya R.N."/>
            <person name="Bailey T.L."/>
            <person name="Bansal M."/>
            <person name="Baxter L."/>
            <person name="Beisel K.W."/>
            <person name="Bersano T."/>
            <person name="Bono H."/>
            <person name="Chalk A.M."/>
            <person name="Chiu K.P."/>
            <person name="Choudhary V."/>
            <person name="Christoffels A."/>
            <person name="Clutterbuck D.R."/>
            <person name="Crowe M.L."/>
            <person name="Dalla E."/>
            <person name="Dalrymple B.P."/>
            <person name="de Bono B."/>
            <person name="Della Gatta G."/>
            <person name="di Bernardo D."/>
            <person name="Down T."/>
            <person name="Engstrom P."/>
            <person name="Fagiolini M."/>
            <person name="Faulkner G."/>
            <person name="Fletcher C.F."/>
            <person name="Fukushima T."/>
            <person name="Furuno M."/>
            <person name="Futaki S."/>
            <person name="Gariboldi M."/>
            <person name="Georgii-Hemming P."/>
            <person name="Gingeras T.R."/>
            <person name="Gojobori T."/>
            <person name="Green R.E."/>
            <person name="Gustincich S."/>
            <person name="Harbers M."/>
            <person name="Hayashi Y."/>
            <person name="Hensch T.K."/>
            <person name="Hirokawa N."/>
            <person name="Hill D."/>
            <person name="Huminiecki L."/>
            <person name="Iacono M."/>
            <person name="Ikeo K."/>
            <person name="Iwama A."/>
            <person name="Ishikawa T."/>
            <person name="Jakt M."/>
            <person name="Kanapin A."/>
            <person name="Katoh M."/>
            <person name="Kawasawa Y."/>
            <person name="Kelso J."/>
            <person name="Kitamura H."/>
            <person name="Kitano H."/>
            <person name="Kollias G."/>
            <person name="Krishnan S.P."/>
            <person name="Kruger A."/>
            <person name="Kummerfeld S.K."/>
            <person name="Kurochkin I.V."/>
            <person name="Lareau L.F."/>
            <person name="Lazarevic D."/>
            <person name="Lipovich L."/>
            <person name="Liu J."/>
            <person name="Liuni S."/>
            <person name="McWilliam S."/>
            <person name="Madan Babu M."/>
            <person name="Madera M."/>
            <person name="Marchionni L."/>
            <person name="Matsuda H."/>
            <person name="Matsuzawa S."/>
            <person name="Miki H."/>
            <person name="Mignone F."/>
            <person name="Miyake S."/>
            <person name="Morris K."/>
            <person name="Mottagui-Tabar S."/>
            <person name="Mulder N."/>
            <person name="Nakano N."/>
            <person name="Nakauchi H."/>
            <person name="Ng P."/>
            <person name="Nilsson R."/>
            <person name="Nishiguchi S."/>
            <person name="Nishikawa S."/>
            <person name="Nori F."/>
            <person name="Ohara O."/>
            <person name="Okazaki Y."/>
            <person name="Orlando V."/>
            <person name="Pang K.C."/>
            <person name="Pavan W.J."/>
            <person name="Pavesi G."/>
            <person name="Pesole G."/>
            <person name="Petrovsky N."/>
            <person name="Piazza S."/>
            <person name="Reed J."/>
            <person name="Reid J.F."/>
            <person name="Ring B.Z."/>
            <person name="Ringwald M."/>
            <person name="Rost B."/>
            <person name="Ruan Y."/>
            <person name="Salzberg S.L."/>
            <person name="Sandelin A."/>
            <person name="Schneider C."/>
            <person name="Schoenbach C."/>
            <person name="Sekiguchi K."/>
            <person name="Semple C.A."/>
            <person name="Seno S."/>
            <person name="Sessa L."/>
            <person name="Sheng Y."/>
            <person name="Shibata Y."/>
            <person name="Shimada H."/>
            <person name="Shimada K."/>
            <person name="Silva D."/>
            <person name="Sinclair B."/>
            <person name="Sperling S."/>
            <person name="Stupka E."/>
            <person name="Sugiura K."/>
            <person name="Sultana R."/>
            <person name="Takenaka Y."/>
            <person name="Taki K."/>
            <person name="Tammoja K."/>
            <person name="Tan S.L."/>
            <person name="Tang S."/>
            <person name="Taylor M.S."/>
            <person name="Tegner J."/>
            <person name="Teichmann S.A."/>
            <person name="Ueda H.R."/>
            <person name="van Nimwegen E."/>
            <person name="Verardo R."/>
            <person name="Wei C.L."/>
            <person name="Yagi K."/>
            <person name="Yamanishi H."/>
            <person name="Zabarovsky E."/>
            <person name="Zhu S."/>
            <person name="Zimmer A."/>
            <person name="Hide W."/>
            <person name="Bult C."/>
            <person name="Grimmond S.M."/>
            <person name="Teasdale R.D."/>
            <person name="Liu E.T."/>
            <person name="Brusic V."/>
            <person name="Quackenbush J."/>
            <person name="Wahlestedt C."/>
            <person name="Mattick J.S."/>
            <person name="Hume D.A."/>
            <person name="Kai C."/>
            <person name="Sasaki D."/>
            <person name="Tomaru Y."/>
            <person name="Fukuda S."/>
            <person name="Kanamori-Katayama M."/>
            <person name="Suzuki M."/>
            <person name="Aoki J."/>
            <person name="Arakawa T."/>
            <person name="Iida J."/>
            <person name="Imamura K."/>
            <person name="Itoh M."/>
            <person name="Kato T."/>
            <person name="Kawaji H."/>
            <person name="Kawagashira N."/>
            <person name="Kawashima T."/>
            <person name="Kojima M."/>
            <person name="Kondo S."/>
            <person name="Konno H."/>
            <person name="Nakano K."/>
            <person name="Ninomiya N."/>
            <person name="Nishio T."/>
            <person name="Okada M."/>
            <person name="Plessy C."/>
            <person name="Shibata K."/>
            <person name="Shiraki T."/>
            <person name="Suzuki S."/>
            <person name="Tagami M."/>
            <person name="Waki K."/>
            <person name="Watahiki A."/>
            <person name="Okamura-Oho Y."/>
            <person name="Suzuki H."/>
            <person name="Kawai J."/>
            <person name="Hayashizaki Y."/>
        </authorList>
    </citation>
    <scope>NUCLEOTIDE SEQUENCE [LARGE SCALE MRNA]</scope>
    <source>
        <strain evidence="6">C57BL/6J</strain>
        <tissue evidence="7">Embryo</tissue>
        <tissue evidence="6">Kidney</tissue>
    </source>
</reference>
<reference evidence="4" key="3">
    <citation type="journal article" date="2004" name="Genome Res.">
        <title>The status, quality, and expansion of the NIH full-length cDNA project: the Mammalian Gene Collection (MGC).</title>
        <authorList>
            <consortium name="The MGC Project Team"/>
        </authorList>
    </citation>
    <scope>NUCLEOTIDE SEQUENCE [LARGE SCALE MRNA]</scope>
    <source>
        <strain evidence="4">FVB/N</strain>
        <tissue evidence="4">Kidney</tissue>
    </source>
</reference>
<proteinExistence type="evidence at transcript level"/>
<name>GOT1A_MOUSE</name>
<gene>
    <name evidence="8" type="primary">Golt1a</name>
</gene>
<dbReference type="EMBL" id="AY707855">
    <property type="protein sequence ID" value="AAW34128.1"/>
    <property type="molecule type" value="mRNA"/>
</dbReference>
<dbReference type="EMBL" id="AY707856">
    <property type="protein sequence ID" value="AAW34129.1"/>
    <property type="molecule type" value="mRNA"/>
</dbReference>
<dbReference type="EMBL" id="AK002581">
    <property type="protein sequence ID" value="BAB22205.1"/>
    <property type="molecule type" value="mRNA"/>
</dbReference>
<dbReference type="EMBL" id="AK141378">
    <property type="protein sequence ID" value="BAE24665.1"/>
    <property type="molecule type" value="mRNA"/>
</dbReference>
<dbReference type="EMBL" id="BC024448">
    <property type="protein sequence ID" value="AAH24448.1"/>
    <property type="molecule type" value="mRNA"/>
</dbReference>
<dbReference type="CCDS" id="CCDS35709.1"/>
<dbReference type="RefSeq" id="NP_080956.1">
    <property type="nucleotide sequence ID" value="NM_026680.4"/>
</dbReference>
<dbReference type="SMR" id="Q9DCQ3"/>
<dbReference type="FunCoup" id="Q9DCQ3">
    <property type="interactions" value="294"/>
</dbReference>
<dbReference type="STRING" id="10090.ENSMUSP00000092136"/>
<dbReference type="PaxDb" id="10090-ENSMUSP00000138922"/>
<dbReference type="ProteomicsDB" id="271254"/>
<dbReference type="DNASU" id="68338"/>
<dbReference type="Ensembl" id="ENSMUST00000094557.7">
    <property type="protein sequence ID" value="ENSMUSP00000092136.4"/>
    <property type="gene ID" value="ENSMUSG00000103421.2"/>
</dbReference>
<dbReference type="Ensembl" id="ENSMUST00000183489.4">
    <property type="protein sequence ID" value="ENSMUSP00000139189.2"/>
    <property type="gene ID" value="ENSMUSG00000098306.10"/>
</dbReference>
<dbReference type="GeneID" id="68338"/>
<dbReference type="KEGG" id="mmu:68338"/>
<dbReference type="UCSC" id="uc007cqa.1">
    <property type="organism name" value="mouse"/>
</dbReference>
<dbReference type="AGR" id="MGI:1915588"/>
<dbReference type="CTD" id="127845"/>
<dbReference type="MGI" id="MGI:1915588">
    <property type="gene designation" value="Golt1a"/>
</dbReference>
<dbReference type="VEuPathDB" id="HostDB:ENSMUSG00000098306"/>
<dbReference type="VEuPathDB" id="HostDB:ENSMUSG00000103421"/>
<dbReference type="eggNOG" id="KOG1743">
    <property type="taxonomic scope" value="Eukaryota"/>
</dbReference>
<dbReference type="GeneTree" id="ENSGT00390000014507"/>
<dbReference type="HOGENOM" id="CLU_124519_2_0_1"/>
<dbReference type="InParanoid" id="Q9DCQ3"/>
<dbReference type="OMA" id="FFFQRPK"/>
<dbReference type="OrthoDB" id="204784at2759"/>
<dbReference type="PhylomeDB" id="Q9DCQ3"/>
<dbReference type="TreeFam" id="TF300267"/>
<dbReference type="BioGRID-ORCS" id="68338">
    <property type="hits" value="2 hits in 79 CRISPR screens"/>
</dbReference>
<dbReference type="PRO" id="PR:Q9DCQ3"/>
<dbReference type="Proteomes" id="UP000000589">
    <property type="component" value="Chromosome 1"/>
</dbReference>
<dbReference type="RNAct" id="Q9DCQ3">
    <property type="molecule type" value="protein"/>
</dbReference>
<dbReference type="Bgee" id="ENSMUSG00000098306">
    <property type="expression patterns" value="Expressed in jejunum and 19 other cell types or tissues"/>
</dbReference>
<dbReference type="ExpressionAtlas" id="Q9DCQ3">
    <property type="expression patterns" value="baseline and differential"/>
</dbReference>
<dbReference type="GO" id="GO:0005829">
    <property type="term" value="C:cytosol"/>
    <property type="evidence" value="ECO:0007669"/>
    <property type="project" value="GOC"/>
</dbReference>
<dbReference type="GO" id="GO:0005783">
    <property type="term" value="C:endoplasmic reticulum"/>
    <property type="evidence" value="ECO:0007669"/>
    <property type="project" value="Ensembl"/>
</dbReference>
<dbReference type="GO" id="GO:0000137">
    <property type="term" value="C:Golgi cis cisterna"/>
    <property type="evidence" value="ECO:0007669"/>
    <property type="project" value="Ensembl"/>
</dbReference>
<dbReference type="GO" id="GO:0000139">
    <property type="term" value="C:Golgi membrane"/>
    <property type="evidence" value="ECO:0007669"/>
    <property type="project" value="UniProtKB-SubCell"/>
</dbReference>
<dbReference type="GO" id="GO:0005635">
    <property type="term" value="C:nuclear envelope"/>
    <property type="evidence" value="ECO:0007669"/>
    <property type="project" value="Ensembl"/>
</dbReference>
<dbReference type="GO" id="GO:0005802">
    <property type="term" value="C:trans-Golgi network"/>
    <property type="evidence" value="ECO:0007669"/>
    <property type="project" value="Ensembl"/>
</dbReference>
<dbReference type="GO" id="GO:0006888">
    <property type="term" value="P:endoplasmic reticulum to Golgi vesicle-mediated transport"/>
    <property type="evidence" value="ECO:0007669"/>
    <property type="project" value="InterPro"/>
</dbReference>
<dbReference type="GO" id="GO:0015031">
    <property type="term" value="P:protein transport"/>
    <property type="evidence" value="ECO:0007669"/>
    <property type="project" value="UniProtKB-KW"/>
</dbReference>
<dbReference type="GO" id="GO:0042147">
    <property type="term" value="P:retrograde transport, endosome to Golgi"/>
    <property type="evidence" value="ECO:0007669"/>
    <property type="project" value="InterPro"/>
</dbReference>
<dbReference type="InterPro" id="IPR045176">
    <property type="entry name" value="Got1"/>
</dbReference>
<dbReference type="InterPro" id="IPR007305">
    <property type="entry name" value="Vesicle_transpt_Got1/SFT2"/>
</dbReference>
<dbReference type="PANTHER" id="PTHR21493">
    <property type="entry name" value="CGI-141-RELATED/LIPASE CONTAINING PROTEIN"/>
    <property type="match status" value="1"/>
</dbReference>
<dbReference type="PANTHER" id="PTHR21493:SF245">
    <property type="entry name" value="VESICLE TRANSPORT PROTEIN GOT1A"/>
    <property type="match status" value="1"/>
</dbReference>
<dbReference type="Pfam" id="PF04178">
    <property type="entry name" value="Got1"/>
    <property type="match status" value="1"/>
</dbReference>